<feature type="chain" id="PRO_1000184641" description="ATP synthase subunit delta">
    <location>
        <begin position="1"/>
        <end position="180"/>
    </location>
</feature>
<accession>B9MS71</accession>
<organism>
    <name type="scientific">Caldicellulosiruptor bescii (strain ATCC BAA-1888 / DSM 6725 / KCTC 15123 / Z-1320)</name>
    <name type="common">Anaerocellum thermophilum</name>
    <dbReference type="NCBI Taxonomy" id="521460"/>
    <lineage>
        <taxon>Bacteria</taxon>
        <taxon>Bacillati</taxon>
        <taxon>Bacillota</taxon>
        <taxon>Bacillota incertae sedis</taxon>
        <taxon>Caldicellulosiruptorales</taxon>
        <taxon>Caldicellulosiruptoraceae</taxon>
        <taxon>Caldicellulosiruptor</taxon>
    </lineage>
</organism>
<keyword id="KW-0066">ATP synthesis</keyword>
<keyword id="KW-1003">Cell membrane</keyword>
<keyword id="KW-0139">CF(1)</keyword>
<keyword id="KW-0375">Hydrogen ion transport</keyword>
<keyword id="KW-0406">Ion transport</keyword>
<keyword id="KW-0472">Membrane</keyword>
<keyword id="KW-0813">Transport</keyword>
<reference key="1">
    <citation type="submission" date="2009-01" db="EMBL/GenBank/DDBJ databases">
        <title>Complete sequence of chromosome of Caldicellulosiruptor becscii DSM 6725.</title>
        <authorList>
            <person name="Lucas S."/>
            <person name="Copeland A."/>
            <person name="Lapidus A."/>
            <person name="Glavina del Rio T."/>
            <person name="Tice H."/>
            <person name="Bruce D."/>
            <person name="Goodwin L."/>
            <person name="Pitluck S."/>
            <person name="Sims D."/>
            <person name="Meincke L."/>
            <person name="Brettin T."/>
            <person name="Detter J.C."/>
            <person name="Han C."/>
            <person name="Larimer F."/>
            <person name="Land M."/>
            <person name="Hauser L."/>
            <person name="Kyrpides N."/>
            <person name="Ovchinnikova G."/>
            <person name="Kataeva I."/>
            <person name="Adams M.W.W."/>
        </authorList>
    </citation>
    <scope>NUCLEOTIDE SEQUENCE [LARGE SCALE GENOMIC DNA]</scope>
    <source>
        <strain>ATCC BAA-1888 / DSM 6725 / KCTC 15123 / Z-1320</strain>
    </source>
</reference>
<protein>
    <recommendedName>
        <fullName evidence="1">ATP synthase subunit delta</fullName>
    </recommendedName>
    <alternativeName>
        <fullName evidence="1">ATP synthase F(1) sector subunit delta</fullName>
    </alternativeName>
    <alternativeName>
        <fullName evidence="1">F-type ATPase subunit delta</fullName>
        <shortName evidence="1">F-ATPase subunit delta</shortName>
    </alternativeName>
</protein>
<sequence length="180" mass="21073">MLAAKRYAEALIKLGQEEGKLEIFYEQLFKMFEIIKNNNEFNTIWFDLEMKRSEKKQRIKVFFGGDIDSYILNLLYLLIDKRREIILTYIPFYYKEIYDKIVGNVDVQVIVAHEIGSDVLNKISKWLLKKYGVKNPRFIVKVDKSIIGGIKLLFNNIEVDASIKGALDSMRKELVKIAIL</sequence>
<comment type="function">
    <text evidence="1">F(1)F(0) ATP synthase produces ATP from ADP in the presence of a proton or sodium gradient. F-type ATPases consist of two structural domains, F(1) containing the extramembraneous catalytic core and F(0) containing the membrane proton channel, linked together by a central stalk and a peripheral stalk. During catalysis, ATP synthesis in the catalytic domain of F(1) is coupled via a rotary mechanism of the central stalk subunits to proton translocation.</text>
</comment>
<comment type="function">
    <text evidence="1">This protein is part of the stalk that links CF(0) to CF(1). It either transmits conformational changes from CF(0) to CF(1) or is implicated in proton conduction.</text>
</comment>
<comment type="subunit">
    <text evidence="1">F-type ATPases have 2 components, F(1) - the catalytic core - and F(0) - the membrane proton channel. F(1) has five subunits: alpha(3), beta(3), gamma(1), delta(1), epsilon(1). F(0) has three main subunits: a(1), b(2) and c(10-14). The alpha and beta chains form an alternating ring which encloses part of the gamma chain. F(1) is attached to F(0) by a central stalk formed by the gamma and epsilon chains, while a peripheral stalk is formed by the delta and b chains.</text>
</comment>
<comment type="subcellular location">
    <subcellularLocation>
        <location evidence="1">Cell membrane</location>
        <topology evidence="1">Peripheral membrane protein</topology>
    </subcellularLocation>
</comment>
<comment type="similarity">
    <text evidence="1">Belongs to the ATPase delta chain family.</text>
</comment>
<gene>
    <name evidence="1" type="primary">atpH</name>
    <name type="ordered locus">Athe_1427</name>
</gene>
<name>ATPD_CALBD</name>
<dbReference type="EMBL" id="CP001393">
    <property type="protein sequence ID" value="ACM60525.1"/>
    <property type="molecule type" value="Genomic_DNA"/>
</dbReference>
<dbReference type="RefSeq" id="WP_015907890.1">
    <property type="nucleotide sequence ID" value="NC_012034.1"/>
</dbReference>
<dbReference type="SMR" id="B9MS71"/>
<dbReference type="STRING" id="521460.Athe_1427"/>
<dbReference type="GeneID" id="31772772"/>
<dbReference type="KEGG" id="ate:Athe_1427"/>
<dbReference type="eggNOG" id="COG0712">
    <property type="taxonomic scope" value="Bacteria"/>
</dbReference>
<dbReference type="HOGENOM" id="CLU_085114_4_1_9"/>
<dbReference type="Proteomes" id="UP000007723">
    <property type="component" value="Chromosome"/>
</dbReference>
<dbReference type="GO" id="GO:0005886">
    <property type="term" value="C:plasma membrane"/>
    <property type="evidence" value="ECO:0007669"/>
    <property type="project" value="UniProtKB-SubCell"/>
</dbReference>
<dbReference type="GO" id="GO:0045259">
    <property type="term" value="C:proton-transporting ATP synthase complex"/>
    <property type="evidence" value="ECO:0007669"/>
    <property type="project" value="UniProtKB-KW"/>
</dbReference>
<dbReference type="GO" id="GO:0046933">
    <property type="term" value="F:proton-transporting ATP synthase activity, rotational mechanism"/>
    <property type="evidence" value="ECO:0007669"/>
    <property type="project" value="UniProtKB-UniRule"/>
</dbReference>
<dbReference type="Gene3D" id="1.10.520.20">
    <property type="entry name" value="N-terminal domain of the delta subunit of the F1F0-ATP synthase"/>
    <property type="match status" value="1"/>
</dbReference>
<dbReference type="HAMAP" id="MF_01416">
    <property type="entry name" value="ATP_synth_delta_bact"/>
    <property type="match status" value="1"/>
</dbReference>
<dbReference type="InterPro" id="IPR026015">
    <property type="entry name" value="ATP_synth_OSCP/delta_N_sf"/>
</dbReference>
<dbReference type="InterPro" id="IPR000711">
    <property type="entry name" value="ATPase_OSCP/dsu"/>
</dbReference>
<dbReference type="NCBIfam" id="TIGR01145">
    <property type="entry name" value="ATP_synt_delta"/>
    <property type="match status" value="1"/>
</dbReference>
<dbReference type="PANTHER" id="PTHR11910">
    <property type="entry name" value="ATP SYNTHASE DELTA CHAIN"/>
    <property type="match status" value="1"/>
</dbReference>
<dbReference type="Pfam" id="PF00213">
    <property type="entry name" value="OSCP"/>
    <property type="match status" value="1"/>
</dbReference>
<dbReference type="PRINTS" id="PR00125">
    <property type="entry name" value="ATPASEDELTA"/>
</dbReference>
<dbReference type="SUPFAM" id="SSF47928">
    <property type="entry name" value="N-terminal domain of the delta subunit of the F1F0-ATP synthase"/>
    <property type="match status" value="1"/>
</dbReference>
<proteinExistence type="inferred from homology"/>
<evidence type="ECO:0000255" key="1">
    <source>
        <dbReference type="HAMAP-Rule" id="MF_01416"/>
    </source>
</evidence>